<comment type="function">
    <text evidence="1">Methyltransferase required for the conversion of demethylmenaquinol (DMKH2) to menaquinol (MKH2).</text>
</comment>
<comment type="catalytic activity">
    <reaction evidence="1">
        <text>a 2-demethylmenaquinol + S-adenosyl-L-methionine = a menaquinol + S-adenosyl-L-homocysteine + H(+)</text>
        <dbReference type="Rhea" id="RHEA:42640"/>
        <dbReference type="Rhea" id="RHEA-COMP:9539"/>
        <dbReference type="Rhea" id="RHEA-COMP:9563"/>
        <dbReference type="ChEBI" id="CHEBI:15378"/>
        <dbReference type="ChEBI" id="CHEBI:18151"/>
        <dbReference type="ChEBI" id="CHEBI:55437"/>
        <dbReference type="ChEBI" id="CHEBI:57856"/>
        <dbReference type="ChEBI" id="CHEBI:59789"/>
        <dbReference type="EC" id="2.1.1.163"/>
    </reaction>
</comment>
<comment type="pathway">
    <text evidence="1">Quinol/quinone metabolism; menaquinone biosynthesis; menaquinol from 1,4-dihydroxy-2-naphthoate: step 2/2.</text>
</comment>
<comment type="similarity">
    <text evidence="1">Belongs to the class I-like SAM-binding methyltransferase superfamily. MenG/UbiE family.</text>
</comment>
<evidence type="ECO:0000255" key="1">
    <source>
        <dbReference type="HAMAP-Rule" id="MF_01813"/>
    </source>
</evidence>
<organism>
    <name type="scientific">Listeria monocytogenes serotype 4b (strain F2365)</name>
    <dbReference type="NCBI Taxonomy" id="265669"/>
    <lineage>
        <taxon>Bacteria</taxon>
        <taxon>Bacillati</taxon>
        <taxon>Bacillota</taxon>
        <taxon>Bacilli</taxon>
        <taxon>Bacillales</taxon>
        <taxon>Listeriaceae</taxon>
        <taxon>Listeria</taxon>
    </lineage>
</organism>
<dbReference type="EC" id="2.1.1.163" evidence="1"/>
<dbReference type="EMBL" id="AE017262">
    <property type="protein sequence ID" value="AAT04730.1"/>
    <property type="molecule type" value="Genomic_DNA"/>
</dbReference>
<dbReference type="RefSeq" id="WP_003726790.1">
    <property type="nucleotide sequence ID" value="NC_002973.6"/>
</dbReference>
<dbReference type="SMR" id="Q71Y84"/>
<dbReference type="GeneID" id="93239845"/>
<dbReference type="KEGG" id="lmf:LMOf2365_1960"/>
<dbReference type="HOGENOM" id="CLU_037990_0_0_9"/>
<dbReference type="UniPathway" id="UPA00079">
    <property type="reaction ID" value="UER00169"/>
</dbReference>
<dbReference type="GO" id="GO:0043770">
    <property type="term" value="F:demethylmenaquinone methyltransferase activity"/>
    <property type="evidence" value="ECO:0007669"/>
    <property type="project" value="UniProtKB-UniRule"/>
</dbReference>
<dbReference type="GO" id="GO:0009234">
    <property type="term" value="P:menaquinone biosynthetic process"/>
    <property type="evidence" value="ECO:0007669"/>
    <property type="project" value="UniProtKB-UniRule"/>
</dbReference>
<dbReference type="GO" id="GO:0032259">
    <property type="term" value="P:methylation"/>
    <property type="evidence" value="ECO:0007669"/>
    <property type="project" value="UniProtKB-KW"/>
</dbReference>
<dbReference type="CDD" id="cd02440">
    <property type="entry name" value="AdoMet_MTases"/>
    <property type="match status" value="1"/>
</dbReference>
<dbReference type="FunFam" id="3.40.50.150:FF:000086">
    <property type="entry name" value="Demethylmenaquinone methyltransferase"/>
    <property type="match status" value="1"/>
</dbReference>
<dbReference type="Gene3D" id="3.40.50.150">
    <property type="entry name" value="Vaccinia Virus protein VP39"/>
    <property type="match status" value="1"/>
</dbReference>
<dbReference type="HAMAP" id="MF_01813">
    <property type="entry name" value="MenG_UbiE_methyltr"/>
    <property type="match status" value="1"/>
</dbReference>
<dbReference type="InterPro" id="IPR014122">
    <property type="entry name" value="MenG_heptapren"/>
</dbReference>
<dbReference type="InterPro" id="IPR029063">
    <property type="entry name" value="SAM-dependent_MTases_sf"/>
</dbReference>
<dbReference type="InterPro" id="IPR004033">
    <property type="entry name" value="UbiE/COQ5_MeTrFase"/>
</dbReference>
<dbReference type="InterPro" id="IPR023576">
    <property type="entry name" value="UbiE/COQ5_MeTrFase_CS"/>
</dbReference>
<dbReference type="NCBIfam" id="TIGR02752">
    <property type="entry name" value="MenG_heptapren"/>
    <property type="match status" value="1"/>
</dbReference>
<dbReference type="NCBIfam" id="TIGR01934">
    <property type="entry name" value="MenG_MenH_UbiE"/>
    <property type="match status" value="1"/>
</dbReference>
<dbReference type="NCBIfam" id="NF001243">
    <property type="entry name" value="PRK00216.1-4"/>
    <property type="match status" value="1"/>
</dbReference>
<dbReference type="NCBIfam" id="NF001244">
    <property type="entry name" value="PRK00216.1-5"/>
    <property type="match status" value="1"/>
</dbReference>
<dbReference type="PANTHER" id="PTHR43591:SF24">
    <property type="entry name" value="2-METHOXY-6-POLYPRENYL-1,4-BENZOQUINOL METHYLASE, MITOCHONDRIAL"/>
    <property type="match status" value="1"/>
</dbReference>
<dbReference type="PANTHER" id="PTHR43591">
    <property type="entry name" value="METHYLTRANSFERASE"/>
    <property type="match status" value="1"/>
</dbReference>
<dbReference type="Pfam" id="PF01209">
    <property type="entry name" value="Ubie_methyltran"/>
    <property type="match status" value="1"/>
</dbReference>
<dbReference type="SUPFAM" id="SSF53335">
    <property type="entry name" value="S-adenosyl-L-methionine-dependent methyltransferases"/>
    <property type="match status" value="1"/>
</dbReference>
<dbReference type="PROSITE" id="PS51608">
    <property type="entry name" value="SAM_MT_UBIE"/>
    <property type="match status" value="1"/>
</dbReference>
<dbReference type="PROSITE" id="PS01183">
    <property type="entry name" value="UBIE_1"/>
    <property type="match status" value="1"/>
</dbReference>
<dbReference type="PROSITE" id="PS01184">
    <property type="entry name" value="UBIE_2"/>
    <property type="match status" value="1"/>
</dbReference>
<accession>Q71Y84</accession>
<protein>
    <recommendedName>
        <fullName evidence="1">Demethylmenaquinone methyltransferase</fullName>
        <ecNumber evidence="1">2.1.1.163</ecNumber>
    </recommendedName>
</protein>
<name>MENG_LISMF</name>
<sequence>MTETKEEKVHKVFEKISPSYDRMNSVISFKLHVKWRKETMKLMRVQKGTNVLDVCCGTADWSIMMAEEIGPEGHVTGLDFSENMLKVGREKVKEADLHNVELIHGNAMELPFPDNSFDYVTIGFGLRNVPDYMQVLREMYRVLKPGGQLACIDTSQPNIPGWKQVFNAYFRYVMPVFGKFFAKSYKEYSWLQESTREFPGMARLAEMFQEAGFSYVRYISHSGGASATHFGFKKKEQ</sequence>
<gene>
    <name evidence="1" type="primary">menG</name>
    <name type="ordered locus">LMOf2365_1960</name>
</gene>
<reference key="1">
    <citation type="journal article" date="2004" name="Nucleic Acids Res.">
        <title>Whole genome comparisons of serotype 4b and 1/2a strains of the food-borne pathogen Listeria monocytogenes reveal new insights into the core genome components of this species.</title>
        <authorList>
            <person name="Nelson K.E."/>
            <person name="Fouts D.E."/>
            <person name="Mongodin E.F."/>
            <person name="Ravel J."/>
            <person name="DeBoy R.T."/>
            <person name="Kolonay J.F."/>
            <person name="Rasko D.A."/>
            <person name="Angiuoli S.V."/>
            <person name="Gill S.R."/>
            <person name="Paulsen I.T."/>
            <person name="Peterson J.D."/>
            <person name="White O."/>
            <person name="Nelson W.C."/>
            <person name="Nierman W.C."/>
            <person name="Beanan M.J."/>
            <person name="Brinkac L.M."/>
            <person name="Daugherty S.C."/>
            <person name="Dodson R.J."/>
            <person name="Durkin A.S."/>
            <person name="Madupu R."/>
            <person name="Haft D.H."/>
            <person name="Selengut J."/>
            <person name="Van Aken S.E."/>
            <person name="Khouri H.M."/>
            <person name="Fedorova N."/>
            <person name="Forberger H.A."/>
            <person name="Tran B."/>
            <person name="Kathariou S."/>
            <person name="Wonderling L.D."/>
            <person name="Uhlich G.A."/>
            <person name="Bayles D.O."/>
            <person name="Luchansky J.B."/>
            <person name="Fraser C.M."/>
        </authorList>
    </citation>
    <scope>NUCLEOTIDE SEQUENCE [LARGE SCALE GENOMIC DNA]</scope>
    <source>
        <strain>F2365</strain>
    </source>
</reference>
<keyword id="KW-0474">Menaquinone biosynthesis</keyword>
<keyword id="KW-0489">Methyltransferase</keyword>
<keyword id="KW-0949">S-adenosyl-L-methionine</keyword>
<keyword id="KW-0808">Transferase</keyword>
<feature type="chain" id="PRO_0000193292" description="Demethylmenaquinone methyltransferase">
    <location>
        <begin position="1"/>
        <end position="237"/>
    </location>
</feature>
<feature type="binding site" evidence="1">
    <location>
        <position position="58"/>
    </location>
    <ligand>
        <name>S-adenosyl-L-methionine</name>
        <dbReference type="ChEBI" id="CHEBI:59789"/>
    </ligand>
</feature>
<feature type="binding site" evidence="1">
    <location>
        <position position="79"/>
    </location>
    <ligand>
        <name>S-adenosyl-L-methionine</name>
        <dbReference type="ChEBI" id="CHEBI:59789"/>
    </ligand>
</feature>
<feature type="binding site" evidence="1">
    <location>
        <begin position="106"/>
        <end position="107"/>
    </location>
    <ligand>
        <name>S-adenosyl-L-methionine</name>
        <dbReference type="ChEBI" id="CHEBI:59789"/>
    </ligand>
</feature>
<proteinExistence type="inferred from homology"/>